<evidence type="ECO:0000255" key="1"/>
<evidence type="ECO:0000305" key="2"/>
<protein>
    <recommendedName>
        <fullName>Phytoene desaturase (lycopene-forming)</fullName>
        <ecNumber>1.3.99.31</ecNumber>
    </recommendedName>
    <alternativeName>
        <fullName>4-step phytoene desaturase</fullName>
    </alternativeName>
    <alternativeName>
        <fullName>Phytoene dehydrogenase</fullName>
    </alternativeName>
</protein>
<organism>
    <name type="scientific">Pseudescherichia vulneris</name>
    <name type="common">Escherichia vulneris</name>
    <dbReference type="NCBI Taxonomy" id="566"/>
    <lineage>
        <taxon>Bacteria</taxon>
        <taxon>Pseudomonadati</taxon>
        <taxon>Pseudomonadota</taxon>
        <taxon>Gammaproteobacteria</taxon>
        <taxon>Enterobacterales</taxon>
        <taxon>Enterobacteriaceae</taxon>
        <taxon>Pseudescherichia</taxon>
    </lineage>
</organism>
<feature type="chain" id="PRO_0000067685" description="Phytoene desaturase (lycopene-forming)">
    <location>
        <begin position="1"/>
        <end position="492"/>
    </location>
</feature>
<feature type="binding site" evidence="1">
    <location>
        <begin position="5"/>
        <end position="38"/>
    </location>
    <ligand>
        <name>FAD</name>
        <dbReference type="ChEBI" id="CHEBI:57692"/>
    </ligand>
</feature>
<name>CRTI_PSEVU</name>
<dbReference type="EC" id="1.3.99.31"/>
<dbReference type="EMBL" id="M38423">
    <property type="protein sequence ID" value="AAA24820.1"/>
    <property type="molecule type" value="Genomic_DNA"/>
</dbReference>
<dbReference type="EMBL" id="M87280">
    <property type="protein sequence ID" value="AAA64981.1"/>
    <property type="molecule type" value="Genomic_DNA"/>
</dbReference>
<dbReference type="PIR" id="A39273">
    <property type="entry name" value="A33120"/>
</dbReference>
<dbReference type="SMR" id="P22871"/>
<dbReference type="UniPathway" id="UPA00803"/>
<dbReference type="GO" id="GO:0016627">
    <property type="term" value="F:oxidoreductase activity, acting on the CH-CH group of donors"/>
    <property type="evidence" value="ECO:0007669"/>
    <property type="project" value="UniProtKB-ARBA"/>
</dbReference>
<dbReference type="GO" id="GO:0016117">
    <property type="term" value="P:carotenoid biosynthetic process"/>
    <property type="evidence" value="ECO:0007669"/>
    <property type="project" value="UniProtKB-KW"/>
</dbReference>
<dbReference type="FunFam" id="3.50.50.60:FF:000378">
    <property type="entry name" value="Phytoene desaturase"/>
    <property type="match status" value="1"/>
</dbReference>
<dbReference type="FunFam" id="3.50.50.60:FF:000413">
    <property type="entry name" value="Phytoene desaturase (lycopene-forming)"/>
    <property type="match status" value="1"/>
</dbReference>
<dbReference type="Gene3D" id="3.50.50.60">
    <property type="entry name" value="FAD/NAD(P)-binding domain"/>
    <property type="match status" value="3"/>
</dbReference>
<dbReference type="InterPro" id="IPR002937">
    <property type="entry name" value="Amino_oxidase"/>
</dbReference>
<dbReference type="InterPro" id="IPR014105">
    <property type="entry name" value="Carotenoid/retinoid_OxRdtase"/>
</dbReference>
<dbReference type="InterPro" id="IPR036188">
    <property type="entry name" value="FAD/NAD-bd_sf"/>
</dbReference>
<dbReference type="InterPro" id="IPR008150">
    <property type="entry name" value="Phytoene_DH_bac_CS"/>
</dbReference>
<dbReference type="NCBIfam" id="TIGR02734">
    <property type="entry name" value="crtI_fam"/>
    <property type="match status" value="1"/>
</dbReference>
<dbReference type="PANTHER" id="PTHR43734:SF3">
    <property type="entry name" value="B-CAROTENE KETOLASE"/>
    <property type="match status" value="1"/>
</dbReference>
<dbReference type="PANTHER" id="PTHR43734">
    <property type="entry name" value="PHYTOENE DESATURASE"/>
    <property type="match status" value="1"/>
</dbReference>
<dbReference type="Pfam" id="PF01593">
    <property type="entry name" value="Amino_oxidase"/>
    <property type="match status" value="1"/>
</dbReference>
<dbReference type="SUPFAM" id="SSF51905">
    <property type="entry name" value="FAD/NAD(P)-binding domain"/>
    <property type="match status" value="1"/>
</dbReference>
<dbReference type="PROSITE" id="PS00982">
    <property type="entry name" value="PHYTOENE_DH"/>
    <property type="match status" value="1"/>
</dbReference>
<keyword id="KW-0125">Carotenoid biosynthesis</keyword>
<keyword id="KW-0274">FAD</keyword>
<keyword id="KW-0285">Flavoprotein</keyword>
<keyword id="KW-0560">Oxidoreductase</keyword>
<gene>
    <name type="primary">crtI</name>
</gene>
<comment type="function">
    <text>This enzyme converts phytoene into lycopene via the intermediaries of phytofluene, zeta-carotene and neurosporene by the introduction of four double bonds.</text>
</comment>
<comment type="catalytic activity">
    <reaction>
        <text>15-cis-phytoene + 4 A = all-trans-lycopene + 4 AH2</text>
        <dbReference type="Rhea" id="RHEA:15585"/>
        <dbReference type="ChEBI" id="CHEBI:13193"/>
        <dbReference type="ChEBI" id="CHEBI:15948"/>
        <dbReference type="ChEBI" id="CHEBI:17499"/>
        <dbReference type="ChEBI" id="CHEBI:27787"/>
        <dbReference type="EC" id="1.3.99.31"/>
    </reaction>
</comment>
<comment type="cofactor">
    <cofactor evidence="2">
        <name>FAD</name>
        <dbReference type="ChEBI" id="CHEBI:57692"/>
    </cofactor>
</comment>
<comment type="pathway">
    <text>Carotenoid biosynthesis; lycopene biosynthesis.</text>
</comment>
<comment type="similarity">
    <text evidence="2">Belongs to the carotenoid/retinoid oxidoreductase family.</text>
</comment>
<sequence>MKKTVVIGAGFGGLALAIRLQAAGIPTVLLEQRDKPGGRAYVWHDQGFTFDAGPTVITDPTALEALFTLAGRRMEDYVRLLPVKPFYRLCWESGKTLDYANDSAELEAQITQFNPRDVEGYRRFLAYSQAVFQEGYLRLGSVPFLSFRDMLRAGPQLLKLQAWQSVYQSVSRFIEDEHLRQAFSFHSLLVGGNPFTTSSIYTLIHALEREWGVWFPEGGTGALVNGMVKLFTDLGGEIELNARVEELVVADNRVSQVRLADGRIFDTDAVASNADVVNTYKKLLGHHPVGQKRAAALERKSMSNSLFVLYFGLNQPHSQLAHHTICFGPRYRELIDEIFTGSALADDFSLYLHSPCVTDPSLAPPGCASFYVLAPVPHLGNAPLDWAQEGPKLRDRIFDYLEERYMPGLRSQLVTQRIFTPADFHDTLDAHLGSAFSIEPLLTQSAWFRPHNRDSDIANLYLVGAGTHPGAGIPGVVASAKATASLMIEDLQ</sequence>
<reference key="1">
    <citation type="journal article" date="1990" name="Proc. Natl. Acad. Sci. U.S.A.">
        <title>Conserved enzymes mediate the early reactions of carotenoid biosynthesis in nonphotosynthetic and photosynthetic prokaryotes.</title>
        <authorList>
            <person name="Armstrong G.A."/>
            <person name="Alberti M."/>
            <person name="Hearst J.E."/>
        </authorList>
    </citation>
    <scope>NUCLEOTIDE SEQUENCE [GENOMIC DNA]</scope>
    <source>
        <strain>ATCC 39368 / Eho10</strain>
    </source>
</reference>
<accession>P22871</accession>
<proteinExistence type="inferred from homology"/>